<organism>
    <name type="scientific">Bartonella bacilliformis (strain ATCC 35685 / KC583 / Herrer 020/F12,63)</name>
    <dbReference type="NCBI Taxonomy" id="360095"/>
    <lineage>
        <taxon>Bacteria</taxon>
        <taxon>Pseudomonadati</taxon>
        <taxon>Pseudomonadota</taxon>
        <taxon>Alphaproteobacteria</taxon>
        <taxon>Hyphomicrobiales</taxon>
        <taxon>Bartonellaceae</taxon>
        <taxon>Bartonella</taxon>
    </lineage>
</organism>
<evidence type="ECO:0000255" key="1">
    <source>
        <dbReference type="HAMAP-Rule" id="MF_01307"/>
    </source>
</evidence>
<evidence type="ECO:0000305" key="2"/>
<name>RS5_BARBK</name>
<protein>
    <recommendedName>
        <fullName evidence="1">Small ribosomal subunit protein uS5</fullName>
    </recommendedName>
    <alternativeName>
        <fullName evidence="2">30S ribosomal protein S5</fullName>
    </alternativeName>
</protein>
<proteinExistence type="inferred from homology"/>
<reference key="1">
    <citation type="submission" date="2006-12" db="EMBL/GenBank/DDBJ databases">
        <authorList>
            <person name="Hendrix L."/>
            <person name="Mohamoud Y."/>
            <person name="Radune D."/>
            <person name="Shvartsbeyn A."/>
            <person name="Daugherty S."/>
            <person name="Dodson R."/>
            <person name="Durkin A.S."/>
            <person name="Harkins D."/>
            <person name="Huot H."/>
            <person name="Kothari S.P."/>
            <person name="Madupu R."/>
            <person name="Li J."/>
            <person name="Nelson W.C."/>
            <person name="Shrivastava S."/>
            <person name="Giglio M.G."/>
            <person name="Haft D."/>
            <person name="Selengut J."/>
            <person name="Fraser-Ligget C."/>
            <person name="Seshadri R."/>
        </authorList>
    </citation>
    <scope>NUCLEOTIDE SEQUENCE [LARGE SCALE GENOMIC DNA]</scope>
    <source>
        <strain>ATCC 35685 / KC583 / Herrer 020/F12,63</strain>
    </source>
</reference>
<sequence length="189" mass="20826">MAQKERSDHNDSDERRNESGGEFIDKLVHINRVAKVVKGGRRFGFAALVVVGDQKGRVGFGHGKAREVPEAIRKATESAKREMIYVPLRSGRTLHHDVEGRHGAGRVLLRSASAGTGIIAGGSMRAIFETLGMQDVVAKSLGSSNPYNMVRATFDALKRQMHPRDIAAQRGIKYSTLQARRQYIVGMEE</sequence>
<accession>A1USR1</accession>
<keyword id="KW-0687">Ribonucleoprotein</keyword>
<keyword id="KW-0689">Ribosomal protein</keyword>
<keyword id="KW-0694">RNA-binding</keyword>
<keyword id="KW-0699">rRNA-binding</keyword>
<gene>
    <name evidence="1" type="primary">rpsE</name>
    <name type="ordered locus">BARBAKC583_0715</name>
</gene>
<comment type="function">
    <text evidence="1">With S4 and S12 plays an important role in translational accuracy.</text>
</comment>
<comment type="function">
    <text evidence="1">Located at the back of the 30S subunit body where it stabilizes the conformation of the head with respect to the body.</text>
</comment>
<comment type="subunit">
    <text evidence="1">Part of the 30S ribosomal subunit. Contacts proteins S4 and S8.</text>
</comment>
<comment type="domain">
    <text>The N-terminal domain interacts with the head of the 30S subunit; the C-terminal domain interacts with the body and contacts protein S4. The interaction surface between S4 and S5 is involved in control of translational fidelity.</text>
</comment>
<comment type="similarity">
    <text evidence="1">Belongs to the universal ribosomal protein uS5 family.</text>
</comment>
<dbReference type="EMBL" id="CP000524">
    <property type="protein sequence ID" value="ABM45133.1"/>
    <property type="molecule type" value="Genomic_DNA"/>
</dbReference>
<dbReference type="RefSeq" id="WP_005766947.1">
    <property type="nucleotide sequence ID" value="NC_008783.1"/>
</dbReference>
<dbReference type="SMR" id="A1USR1"/>
<dbReference type="STRING" id="360095.BARBAKC583_0715"/>
<dbReference type="GeneID" id="4685080"/>
<dbReference type="KEGG" id="bbk:BARBAKC583_0715"/>
<dbReference type="PATRIC" id="fig|360095.6.peg.694"/>
<dbReference type="eggNOG" id="COG0098">
    <property type="taxonomic scope" value="Bacteria"/>
</dbReference>
<dbReference type="HOGENOM" id="CLU_065898_2_2_5"/>
<dbReference type="OrthoDB" id="9809045at2"/>
<dbReference type="Proteomes" id="UP000000643">
    <property type="component" value="Chromosome"/>
</dbReference>
<dbReference type="GO" id="GO:0015935">
    <property type="term" value="C:small ribosomal subunit"/>
    <property type="evidence" value="ECO:0007669"/>
    <property type="project" value="InterPro"/>
</dbReference>
<dbReference type="GO" id="GO:0019843">
    <property type="term" value="F:rRNA binding"/>
    <property type="evidence" value="ECO:0007669"/>
    <property type="project" value="UniProtKB-UniRule"/>
</dbReference>
<dbReference type="GO" id="GO:0003735">
    <property type="term" value="F:structural constituent of ribosome"/>
    <property type="evidence" value="ECO:0007669"/>
    <property type="project" value="InterPro"/>
</dbReference>
<dbReference type="GO" id="GO:0006412">
    <property type="term" value="P:translation"/>
    <property type="evidence" value="ECO:0007669"/>
    <property type="project" value="UniProtKB-UniRule"/>
</dbReference>
<dbReference type="FunFam" id="3.30.160.20:FF:000001">
    <property type="entry name" value="30S ribosomal protein S5"/>
    <property type="match status" value="1"/>
</dbReference>
<dbReference type="FunFam" id="3.30.230.10:FF:000002">
    <property type="entry name" value="30S ribosomal protein S5"/>
    <property type="match status" value="1"/>
</dbReference>
<dbReference type="Gene3D" id="3.30.160.20">
    <property type="match status" value="1"/>
</dbReference>
<dbReference type="Gene3D" id="3.30.230.10">
    <property type="match status" value="1"/>
</dbReference>
<dbReference type="HAMAP" id="MF_01307_B">
    <property type="entry name" value="Ribosomal_uS5_B"/>
    <property type="match status" value="1"/>
</dbReference>
<dbReference type="InterPro" id="IPR020568">
    <property type="entry name" value="Ribosomal_Su5_D2-typ_SF"/>
</dbReference>
<dbReference type="InterPro" id="IPR000851">
    <property type="entry name" value="Ribosomal_uS5"/>
</dbReference>
<dbReference type="InterPro" id="IPR005712">
    <property type="entry name" value="Ribosomal_uS5_bac-type"/>
</dbReference>
<dbReference type="InterPro" id="IPR005324">
    <property type="entry name" value="Ribosomal_uS5_C"/>
</dbReference>
<dbReference type="InterPro" id="IPR013810">
    <property type="entry name" value="Ribosomal_uS5_N"/>
</dbReference>
<dbReference type="InterPro" id="IPR018192">
    <property type="entry name" value="Ribosomal_uS5_N_CS"/>
</dbReference>
<dbReference type="InterPro" id="IPR014721">
    <property type="entry name" value="Ribsml_uS5_D2-typ_fold_subgr"/>
</dbReference>
<dbReference type="NCBIfam" id="TIGR01021">
    <property type="entry name" value="rpsE_bact"/>
    <property type="match status" value="1"/>
</dbReference>
<dbReference type="PANTHER" id="PTHR48277">
    <property type="entry name" value="MITOCHONDRIAL RIBOSOMAL PROTEIN S5"/>
    <property type="match status" value="1"/>
</dbReference>
<dbReference type="PANTHER" id="PTHR48277:SF1">
    <property type="entry name" value="MITOCHONDRIAL RIBOSOMAL PROTEIN S5"/>
    <property type="match status" value="1"/>
</dbReference>
<dbReference type="Pfam" id="PF00333">
    <property type="entry name" value="Ribosomal_S5"/>
    <property type="match status" value="1"/>
</dbReference>
<dbReference type="Pfam" id="PF03719">
    <property type="entry name" value="Ribosomal_S5_C"/>
    <property type="match status" value="1"/>
</dbReference>
<dbReference type="SUPFAM" id="SSF54768">
    <property type="entry name" value="dsRNA-binding domain-like"/>
    <property type="match status" value="1"/>
</dbReference>
<dbReference type="SUPFAM" id="SSF54211">
    <property type="entry name" value="Ribosomal protein S5 domain 2-like"/>
    <property type="match status" value="1"/>
</dbReference>
<dbReference type="PROSITE" id="PS00585">
    <property type="entry name" value="RIBOSOMAL_S5"/>
    <property type="match status" value="1"/>
</dbReference>
<dbReference type="PROSITE" id="PS50881">
    <property type="entry name" value="S5_DSRBD"/>
    <property type="match status" value="1"/>
</dbReference>
<feature type="chain" id="PRO_0000323075" description="Small ribosomal subunit protein uS5">
    <location>
        <begin position="1"/>
        <end position="189"/>
    </location>
</feature>
<feature type="domain" description="S5 DRBM" evidence="1">
    <location>
        <begin position="23"/>
        <end position="86"/>
    </location>
</feature>